<keyword id="KW-0010">Activator</keyword>
<keyword id="KW-0539">Nucleus</keyword>
<keyword id="KW-1185">Reference proteome</keyword>
<keyword id="KW-0804">Transcription</keyword>
<keyword id="KW-0805">Transcription regulation</keyword>
<proteinExistence type="inferred from homology"/>
<dbReference type="EMBL" id="AACD01000068">
    <property type="protein sequence ID" value="EAA59293.1"/>
    <property type="status" value="ALT_SEQ"/>
    <property type="molecule type" value="Genomic_DNA"/>
</dbReference>
<dbReference type="EMBL" id="BN001302">
    <property type="protein sequence ID" value="CBF74511.1"/>
    <property type="status" value="ALT_SEQ"/>
    <property type="molecule type" value="Genomic_DNA"/>
</dbReference>
<dbReference type="RefSeq" id="XP_661798.1">
    <property type="nucleotide sequence ID" value="XM_656706.1"/>
</dbReference>
<dbReference type="SMR" id="Q5B5I6"/>
<dbReference type="FunCoup" id="Q5B5I6">
    <property type="interactions" value="546"/>
</dbReference>
<dbReference type="STRING" id="227321.Q5B5I6"/>
<dbReference type="eggNOG" id="KOG3046">
    <property type="taxonomic scope" value="Eukaryota"/>
</dbReference>
<dbReference type="HOGENOM" id="CLU_011638_0_0_1"/>
<dbReference type="InParanoid" id="Q5B5I6"/>
<dbReference type="Proteomes" id="UP000000560">
    <property type="component" value="Chromosome II"/>
</dbReference>
<dbReference type="GO" id="GO:0016592">
    <property type="term" value="C:mediator complex"/>
    <property type="evidence" value="ECO:0007669"/>
    <property type="project" value="InterPro"/>
</dbReference>
<dbReference type="GO" id="GO:0003712">
    <property type="term" value="F:transcription coregulator activity"/>
    <property type="evidence" value="ECO:0007669"/>
    <property type="project" value="InterPro"/>
</dbReference>
<dbReference type="GO" id="GO:0006357">
    <property type="term" value="P:regulation of transcription by RNA polymerase II"/>
    <property type="evidence" value="ECO:0007669"/>
    <property type="project" value="InterPro"/>
</dbReference>
<dbReference type="InterPro" id="IPR019145">
    <property type="entry name" value="Mediator_Med10"/>
</dbReference>
<dbReference type="Pfam" id="PF09748">
    <property type="entry name" value="Med10"/>
    <property type="match status" value="1"/>
</dbReference>
<feature type="chain" id="PRO_0000303171" description="Mediator of RNA polymerase II transcription subunit 10">
    <location>
        <begin position="1"/>
        <end position="165"/>
    </location>
</feature>
<feature type="region of interest" description="Disordered" evidence="2">
    <location>
        <begin position="54"/>
        <end position="81"/>
    </location>
</feature>
<feature type="region of interest" description="Disordered" evidence="2">
    <location>
        <begin position="143"/>
        <end position="165"/>
    </location>
</feature>
<feature type="compositionally biased region" description="Polar residues" evidence="2">
    <location>
        <begin position="62"/>
        <end position="77"/>
    </location>
</feature>
<gene>
    <name type="primary">nut2</name>
    <name type="synonym">med10</name>
    <name type="ORF">AN4194</name>
</gene>
<organism>
    <name type="scientific">Emericella nidulans (strain FGSC A4 / ATCC 38163 / CBS 112.46 / NRRL 194 / M139)</name>
    <name type="common">Aspergillus nidulans</name>
    <dbReference type="NCBI Taxonomy" id="227321"/>
    <lineage>
        <taxon>Eukaryota</taxon>
        <taxon>Fungi</taxon>
        <taxon>Dikarya</taxon>
        <taxon>Ascomycota</taxon>
        <taxon>Pezizomycotina</taxon>
        <taxon>Eurotiomycetes</taxon>
        <taxon>Eurotiomycetidae</taxon>
        <taxon>Eurotiales</taxon>
        <taxon>Aspergillaceae</taxon>
        <taxon>Aspergillus</taxon>
        <taxon>Aspergillus subgen. Nidulantes</taxon>
    </lineage>
</organism>
<accession>Q5B5I6</accession>
<accession>C8V4L3</accession>
<sequence>MAPITLSTIDGKLKDIIQHLFEIQSAVHGYLGPETQQELVRKIKNLTTALQTLSLHTRDDPTASTTAPNQYQSTNPNDPALHSIALPPEIIDYVDAARNPDIYTREFVELVQRGNQDLKGKKEAFADFRDVLAREMRSAMPELRGEVDKVIQATGGKKQSERERG</sequence>
<evidence type="ECO:0000250" key="1"/>
<evidence type="ECO:0000256" key="2">
    <source>
        <dbReference type="SAM" id="MobiDB-lite"/>
    </source>
</evidence>
<evidence type="ECO:0000305" key="3"/>
<name>MED10_EMENI</name>
<protein>
    <recommendedName>
        <fullName>Mediator of RNA polymerase II transcription subunit 10</fullName>
    </recommendedName>
    <alternativeName>
        <fullName>Mediator complex subunit 10</fullName>
    </alternativeName>
</protein>
<comment type="function">
    <text evidence="1">Component of the Mediator complex, a coactivator involved in the regulated transcription of nearly all RNA polymerase II-dependent genes. Mediator functions as a bridge to convey information from gene-specific regulatory proteins to the basal RNA polymerase II transcription machinery. Mediator is recruited to promoters by direct interactions with regulatory proteins and serves as a scaffold for the assembly of a functional preinitiation complex with RNA polymerase II and the general transcription factors (By similarity).</text>
</comment>
<comment type="subunit">
    <text evidence="1">Component of the Mediator complex.</text>
</comment>
<comment type="subcellular location">
    <subcellularLocation>
        <location evidence="1">Nucleus</location>
    </subcellularLocation>
</comment>
<comment type="similarity">
    <text evidence="3">Belongs to the Mediator complex subunit 10 family.</text>
</comment>
<comment type="sequence caution" evidence="3">
    <conflict type="erroneous gene model prediction">
        <sequence resource="EMBL-CDS" id="CBF74511"/>
    </conflict>
</comment>
<comment type="sequence caution" evidence="3">
    <conflict type="erroneous gene model prediction">
        <sequence resource="EMBL-CDS" id="EAA59293"/>
    </conflict>
</comment>
<reference key="1">
    <citation type="journal article" date="2005" name="Nature">
        <title>Sequencing of Aspergillus nidulans and comparative analysis with A. fumigatus and A. oryzae.</title>
        <authorList>
            <person name="Galagan J.E."/>
            <person name="Calvo S.E."/>
            <person name="Cuomo C."/>
            <person name="Ma L.-J."/>
            <person name="Wortman J.R."/>
            <person name="Batzoglou S."/>
            <person name="Lee S.-I."/>
            <person name="Bastuerkmen M."/>
            <person name="Spevak C.C."/>
            <person name="Clutterbuck J."/>
            <person name="Kapitonov V."/>
            <person name="Jurka J."/>
            <person name="Scazzocchio C."/>
            <person name="Farman M.L."/>
            <person name="Butler J."/>
            <person name="Purcell S."/>
            <person name="Harris S."/>
            <person name="Braus G.H."/>
            <person name="Draht O."/>
            <person name="Busch S."/>
            <person name="D'Enfert C."/>
            <person name="Bouchier C."/>
            <person name="Goldman G.H."/>
            <person name="Bell-Pedersen D."/>
            <person name="Griffiths-Jones S."/>
            <person name="Doonan J.H."/>
            <person name="Yu J."/>
            <person name="Vienken K."/>
            <person name="Pain A."/>
            <person name="Freitag M."/>
            <person name="Selker E.U."/>
            <person name="Archer D.B."/>
            <person name="Penalva M.A."/>
            <person name="Oakley B.R."/>
            <person name="Momany M."/>
            <person name="Tanaka T."/>
            <person name="Kumagai T."/>
            <person name="Asai K."/>
            <person name="Machida M."/>
            <person name="Nierman W.C."/>
            <person name="Denning D.W."/>
            <person name="Caddick M.X."/>
            <person name="Hynes M."/>
            <person name="Paoletti M."/>
            <person name="Fischer R."/>
            <person name="Miller B.L."/>
            <person name="Dyer P.S."/>
            <person name="Sachs M.S."/>
            <person name="Osmani S.A."/>
            <person name="Birren B.W."/>
        </authorList>
    </citation>
    <scope>NUCLEOTIDE SEQUENCE [LARGE SCALE GENOMIC DNA]</scope>
    <source>
        <strain>FGSC A4 / ATCC 38163 / CBS 112.46 / NRRL 194 / M139</strain>
    </source>
</reference>
<reference key="2">
    <citation type="journal article" date="2009" name="Fungal Genet. Biol.">
        <title>The 2008 update of the Aspergillus nidulans genome annotation: a community effort.</title>
        <authorList>
            <person name="Wortman J.R."/>
            <person name="Gilsenan J.M."/>
            <person name="Joardar V."/>
            <person name="Deegan J."/>
            <person name="Clutterbuck J."/>
            <person name="Andersen M.R."/>
            <person name="Archer D."/>
            <person name="Bencina M."/>
            <person name="Braus G."/>
            <person name="Coutinho P."/>
            <person name="von Dohren H."/>
            <person name="Doonan J."/>
            <person name="Driessen A.J."/>
            <person name="Durek P."/>
            <person name="Espeso E."/>
            <person name="Fekete E."/>
            <person name="Flipphi M."/>
            <person name="Estrada C.G."/>
            <person name="Geysens S."/>
            <person name="Goldman G."/>
            <person name="de Groot P.W."/>
            <person name="Hansen K."/>
            <person name="Harris S.D."/>
            <person name="Heinekamp T."/>
            <person name="Helmstaedt K."/>
            <person name="Henrissat B."/>
            <person name="Hofmann G."/>
            <person name="Homan T."/>
            <person name="Horio T."/>
            <person name="Horiuchi H."/>
            <person name="James S."/>
            <person name="Jones M."/>
            <person name="Karaffa L."/>
            <person name="Karanyi Z."/>
            <person name="Kato M."/>
            <person name="Keller N."/>
            <person name="Kelly D.E."/>
            <person name="Kiel J.A."/>
            <person name="Kim J.M."/>
            <person name="van der Klei I.J."/>
            <person name="Klis F.M."/>
            <person name="Kovalchuk A."/>
            <person name="Krasevec N."/>
            <person name="Kubicek C.P."/>
            <person name="Liu B."/>
            <person name="Maccabe A."/>
            <person name="Meyer V."/>
            <person name="Mirabito P."/>
            <person name="Miskei M."/>
            <person name="Mos M."/>
            <person name="Mullins J."/>
            <person name="Nelson D.R."/>
            <person name="Nielsen J."/>
            <person name="Oakley B.R."/>
            <person name="Osmani S.A."/>
            <person name="Pakula T."/>
            <person name="Paszewski A."/>
            <person name="Paulsen I."/>
            <person name="Pilsyk S."/>
            <person name="Pocsi I."/>
            <person name="Punt P.J."/>
            <person name="Ram A.F."/>
            <person name="Ren Q."/>
            <person name="Robellet X."/>
            <person name="Robson G."/>
            <person name="Seiboth B."/>
            <person name="van Solingen P."/>
            <person name="Specht T."/>
            <person name="Sun J."/>
            <person name="Taheri-Talesh N."/>
            <person name="Takeshita N."/>
            <person name="Ussery D."/>
            <person name="vanKuyk P.A."/>
            <person name="Visser H."/>
            <person name="van de Vondervoort P.J."/>
            <person name="de Vries R.P."/>
            <person name="Walton J."/>
            <person name="Xiang X."/>
            <person name="Xiong Y."/>
            <person name="Zeng A.P."/>
            <person name="Brandt B.W."/>
            <person name="Cornell M.J."/>
            <person name="van den Hondel C.A."/>
            <person name="Visser J."/>
            <person name="Oliver S.G."/>
            <person name="Turner G."/>
        </authorList>
    </citation>
    <scope>GENOME REANNOTATION</scope>
    <source>
        <strain>FGSC A4 / ATCC 38163 / CBS 112.46 / NRRL 194 / M139</strain>
    </source>
</reference>